<evidence type="ECO:0000255" key="1">
    <source>
        <dbReference type="PROSITE-ProRule" id="PRU00407"/>
    </source>
</evidence>
<evidence type="ECO:0000255" key="2">
    <source>
        <dbReference type="PROSITE-ProRule" id="PRU01189"/>
    </source>
</evidence>
<evidence type="ECO:0000269" key="3">
    <source>
    </source>
</evidence>
<evidence type="ECO:0000269" key="4">
    <source>
    </source>
</evidence>
<evidence type="ECO:0000305" key="5"/>
<dbReference type="EMBL" id="AY204178">
    <property type="protein sequence ID" value="AAO39182.1"/>
    <property type="molecule type" value="mRNA"/>
</dbReference>
<dbReference type="EMBL" id="Z83240">
    <property type="protein sequence ID" value="CAB05815.2"/>
    <property type="molecule type" value="Genomic_DNA"/>
</dbReference>
<dbReference type="PIR" id="T25211">
    <property type="entry name" value="T25211"/>
</dbReference>
<dbReference type="RefSeq" id="NP_492615.2">
    <property type="nucleotide sequence ID" value="NM_060214.4"/>
</dbReference>
<dbReference type="SMR" id="P91829"/>
<dbReference type="BioGRID" id="38263">
    <property type="interactions" value="9"/>
</dbReference>
<dbReference type="DIP" id="DIP-24463N"/>
<dbReference type="FunCoup" id="P91829">
    <property type="interactions" value="1356"/>
</dbReference>
<dbReference type="IntAct" id="P91829">
    <property type="interactions" value="5"/>
</dbReference>
<dbReference type="MINT" id="P91829"/>
<dbReference type="STRING" id="6239.T23H4.2.1"/>
<dbReference type="PaxDb" id="6239-T23H4.2"/>
<dbReference type="PeptideAtlas" id="P91829"/>
<dbReference type="EnsemblMetazoa" id="T23H4.2.1">
    <property type="protein sequence ID" value="T23H4.2.1"/>
    <property type="gene ID" value="WBGene00003659"/>
</dbReference>
<dbReference type="GeneID" id="172840"/>
<dbReference type="KEGG" id="cel:CELE_T23H4.2"/>
<dbReference type="UCSC" id="T23H4.2.1">
    <property type="organism name" value="c. elegans"/>
</dbReference>
<dbReference type="AGR" id="WB:WBGene00003659"/>
<dbReference type="CTD" id="172840"/>
<dbReference type="WormBase" id="T23H4.2">
    <property type="protein sequence ID" value="CE32501"/>
    <property type="gene ID" value="WBGene00003659"/>
    <property type="gene designation" value="nhr-69"/>
</dbReference>
<dbReference type="eggNOG" id="KOG4215">
    <property type="taxonomic scope" value="Eukaryota"/>
</dbReference>
<dbReference type="GeneTree" id="ENSGT00970000196158"/>
<dbReference type="HOGENOM" id="CLU_007368_5_2_1"/>
<dbReference type="InParanoid" id="P91829"/>
<dbReference type="OMA" id="ICHICDD"/>
<dbReference type="OrthoDB" id="5771769at2759"/>
<dbReference type="PhylomeDB" id="P91829"/>
<dbReference type="Reactome" id="R-CEL-383280">
    <property type="pathway name" value="Nuclear Receptor transcription pathway"/>
</dbReference>
<dbReference type="SignaLink" id="P91829"/>
<dbReference type="PRO" id="PR:P91829"/>
<dbReference type="Proteomes" id="UP000001940">
    <property type="component" value="Chromosome I"/>
</dbReference>
<dbReference type="Bgee" id="WBGene00003659">
    <property type="expression patterns" value="Expressed in larva and 3 other cell types or tissues"/>
</dbReference>
<dbReference type="GO" id="GO:0005634">
    <property type="term" value="C:nucleus"/>
    <property type="evidence" value="ECO:0000314"/>
    <property type="project" value="WormBase"/>
</dbReference>
<dbReference type="GO" id="GO:0004879">
    <property type="term" value="F:nuclear receptor activity"/>
    <property type="evidence" value="ECO:0000318"/>
    <property type="project" value="GO_Central"/>
</dbReference>
<dbReference type="GO" id="GO:0000978">
    <property type="term" value="F:RNA polymerase II cis-regulatory region sequence-specific DNA binding"/>
    <property type="evidence" value="ECO:0000318"/>
    <property type="project" value="GO_Central"/>
</dbReference>
<dbReference type="GO" id="GO:0046332">
    <property type="term" value="F:SMAD binding"/>
    <property type="evidence" value="ECO:0000353"/>
    <property type="project" value="WormBase"/>
</dbReference>
<dbReference type="GO" id="GO:1990239">
    <property type="term" value="F:steroid hormone binding"/>
    <property type="evidence" value="ECO:0000314"/>
    <property type="project" value="WormBase"/>
</dbReference>
<dbReference type="GO" id="GO:0008270">
    <property type="term" value="F:zinc ion binding"/>
    <property type="evidence" value="ECO:0007669"/>
    <property type="project" value="UniProtKB-KW"/>
</dbReference>
<dbReference type="GO" id="GO:0030154">
    <property type="term" value="P:cell differentiation"/>
    <property type="evidence" value="ECO:0000318"/>
    <property type="project" value="GO_Central"/>
</dbReference>
<dbReference type="GO" id="GO:0000122">
    <property type="term" value="P:negative regulation of transcription by RNA polymerase II"/>
    <property type="evidence" value="ECO:0000315"/>
    <property type="project" value="WormBase"/>
</dbReference>
<dbReference type="GO" id="GO:0006357">
    <property type="term" value="P:regulation of transcription by RNA polymerase II"/>
    <property type="evidence" value="ECO:0000318"/>
    <property type="project" value="GO_Central"/>
</dbReference>
<dbReference type="CDD" id="cd06960">
    <property type="entry name" value="NR_DBD_HNF4A"/>
    <property type="match status" value="1"/>
</dbReference>
<dbReference type="FunFam" id="3.30.50.10:FF:000030">
    <property type="entry name" value="Nuclear Hormone Receptor family"/>
    <property type="match status" value="1"/>
</dbReference>
<dbReference type="FunFam" id="1.10.565.10:FF:000048">
    <property type="entry name" value="Nuclear hormone receptor family member nhr-35"/>
    <property type="match status" value="1"/>
</dbReference>
<dbReference type="Gene3D" id="3.30.50.10">
    <property type="entry name" value="Erythroid Transcription Factor GATA-1, subunit A"/>
    <property type="match status" value="1"/>
</dbReference>
<dbReference type="Gene3D" id="1.10.565.10">
    <property type="entry name" value="Retinoid X Receptor"/>
    <property type="match status" value="1"/>
</dbReference>
<dbReference type="InterPro" id="IPR049636">
    <property type="entry name" value="HNF4-like_DBD"/>
</dbReference>
<dbReference type="InterPro" id="IPR035500">
    <property type="entry name" value="NHR-like_dom_sf"/>
</dbReference>
<dbReference type="InterPro" id="IPR000536">
    <property type="entry name" value="Nucl_hrmn_rcpt_lig-bd"/>
</dbReference>
<dbReference type="InterPro" id="IPR050274">
    <property type="entry name" value="Nuclear_hormone_rcpt_NR2"/>
</dbReference>
<dbReference type="InterPro" id="IPR001723">
    <property type="entry name" value="Nuclear_hrmn_rcpt"/>
</dbReference>
<dbReference type="InterPro" id="IPR001628">
    <property type="entry name" value="Znf_hrmn_rcpt"/>
</dbReference>
<dbReference type="InterPro" id="IPR013088">
    <property type="entry name" value="Znf_NHR/GATA"/>
</dbReference>
<dbReference type="PANTHER" id="PTHR24083">
    <property type="entry name" value="NUCLEAR HORMONE RECEPTOR"/>
    <property type="match status" value="1"/>
</dbReference>
<dbReference type="Pfam" id="PF00104">
    <property type="entry name" value="Hormone_recep"/>
    <property type="match status" value="1"/>
</dbReference>
<dbReference type="Pfam" id="PF00105">
    <property type="entry name" value="zf-C4"/>
    <property type="match status" value="1"/>
</dbReference>
<dbReference type="PRINTS" id="PR00398">
    <property type="entry name" value="STRDHORMONER"/>
</dbReference>
<dbReference type="PRINTS" id="PR00047">
    <property type="entry name" value="STROIDFINGER"/>
</dbReference>
<dbReference type="SMART" id="SM00430">
    <property type="entry name" value="HOLI"/>
    <property type="match status" value="1"/>
</dbReference>
<dbReference type="SMART" id="SM00399">
    <property type="entry name" value="ZnF_C4"/>
    <property type="match status" value="1"/>
</dbReference>
<dbReference type="SUPFAM" id="SSF57716">
    <property type="entry name" value="Glucocorticoid receptor-like (DNA-binding domain)"/>
    <property type="match status" value="1"/>
</dbReference>
<dbReference type="SUPFAM" id="SSF48508">
    <property type="entry name" value="Nuclear receptor ligand-binding domain"/>
    <property type="match status" value="1"/>
</dbReference>
<dbReference type="PROSITE" id="PS51843">
    <property type="entry name" value="NR_LBD"/>
    <property type="match status" value="1"/>
</dbReference>
<dbReference type="PROSITE" id="PS00031">
    <property type="entry name" value="NUCLEAR_REC_DBD_1"/>
    <property type="match status" value="1"/>
</dbReference>
<dbReference type="PROSITE" id="PS51030">
    <property type="entry name" value="NUCLEAR_REC_DBD_2"/>
    <property type="match status" value="1"/>
</dbReference>
<sequence length="373" mass="41778">MVEEICHICNDKSTGKHYGAISCDGCKGFFRRSIRKRYHYQCRFEQNCDVTKNKRNACRACRLQKCVKAGMKSNAIQNERDAIGKRKKTTGAEKEDLIDQLVAAETLCQQLRSSVIKNTSSLAPYDCGKVKWNYEDARAATLDDIGKSIHQQLVLFIEWAKSLPQFSFLAQADQAALLKGGAASIIVLGVAYRSICLTVENTICLANDTLLPKEHATQVGDINCVVGRIIDEIVNPMRRLNMDLIEYVALKAILFFNPVVREINDQSPVENARYAFLRSLQRRCTDKALENMEDESMDCRSGKLLLLLPSLQAIAQQLVEDVQLARLFGLVNVDSLMEELILNDMKPSDPQILQTSLASPVNSSVKAEVELEE</sequence>
<organism>
    <name type="scientific">Caenorhabditis elegans</name>
    <dbReference type="NCBI Taxonomy" id="6239"/>
    <lineage>
        <taxon>Eukaryota</taxon>
        <taxon>Metazoa</taxon>
        <taxon>Ecdysozoa</taxon>
        <taxon>Nematoda</taxon>
        <taxon>Chromadorea</taxon>
        <taxon>Rhabditida</taxon>
        <taxon>Rhabditina</taxon>
        <taxon>Rhabditomorpha</taxon>
        <taxon>Rhabditoidea</taxon>
        <taxon>Rhabditidae</taxon>
        <taxon>Peloderinae</taxon>
        <taxon>Caenorhabditis</taxon>
    </lineage>
</organism>
<comment type="function">
    <text evidence="3 4">Orphan nuclear receptor which, in cooperation with R-SMAD daf-8, modulates the Insulin/IGF-1-like signaling (IIS) pathway, perhaps by regulating expression of the potassium channel exp-2, which in turn modulates the secretion of insulin-like peptide daf-28.</text>
</comment>
<comment type="subunit">
    <text evidence="4">Interacts with R-SMAD daf-8.</text>
</comment>
<comment type="interaction">
    <interactant intactId="EBI-322112">
        <id>P91829</id>
    </interactant>
    <interactant intactId="EBI-316398">
        <id>P92004</id>
        <label>ifbp-1</label>
    </interactant>
    <organismsDiffer>false</organismsDiffer>
    <experiments>3</experiments>
</comment>
<comment type="subcellular location">
    <subcellularLocation>
        <location evidence="1 4">Nucleus</location>
    </subcellularLocation>
</comment>
<comment type="tissue specificity">
    <text evidence="4">Expressed in the ASI neurons, hypodermis, and in tail neurons.</text>
</comment>
<comment type="developmental stage">
    <text evidence="4">Expressed in 8 dpc intestinal precursor cells in developing embryos, and in intestine throughout development into adulthood.</text>
</comment>
<comment type="disruption phenotype">
    <text evidence="4">On a temperature-sensitive daf-7 mutant background, enhances entry of larvae into the developmentally arrested state known as dauer, and also suppresses exit from dauer (PubMed:22359515). Up-regulates expression of the potassium channel exp-2 (PubMed:22359515).</text>
</comment>
<comment type="similarity">
    <text evidence="5">Belongs to the nuclear hormone receptor family.</text>
</comment>
<proteinExistence type="evidence at protein level"/>
<accession>P91829</accession>
<reference key="1">
    <citation type="journal article" date="2005" name="J. Mol. Evol.">
        <title>Explosive lineage-specific expansion of the orphan nuclear receptor HNF4 in nematodes.</title>
        <authorList>
            <person name="Robinson-Rechavi M."/>
            <person name="Maina C.V."/>
            <person name="Gissendanner C.R."/>
            <person name="Laudet V."/>
            <person name="Sluder A."/>
        </authorList>
    </citation>
    <scope>NUCLEOTIDE SEQUENCE [MRNA]</scope>
    <scope>FUNCTION</scope>
</reference>
<reference key="2">
    <citation type="journal article" date="1998" name="Science">
        <title>Genome sequence of the nematode C. elegans: a platform for investigating biology.</title>
        <authorList>
            <consortium name="The C. elegans sequencing consortium"/>
        </authorList>
    </citation>
    <scope>NUCLEOTIDE SEQUENCE [LARGE SCALE GENOMIC DNA]</scope>
    <source>
        <strain>Bristol N2</strain>
    </source>
</reference>
<reference key="3">
    <citation type="journal article" date="2012" name="PLoS Genet.">
        <title>Repression of a potassium channel by nuclear hormone receptor and TGF-beta signaling modulates insulin signaling in Caenorhabditis elegans.</title>
        <authorList>
            <person name="Park D."/>
            <person name="Jones K.L."/>
            <person name="Lee H."/>
            <person name="Snutch T.P."/>
            <person name="Taubert S."/>
            <person name="Riddle D.L."/>
        </authorList>
    </citation>
    <scope>FUNCTION</scope>
    <scope>INTERACTION WITH DAF-8</scope>
    <scope>SUBCELLULAR LOCATION</scope>
    <scope>TISSUE SPECIFICITY</scope>
    <scope>DEVELOPMENTAL STAGE</scope>
    <scope>DISRUPTION PHENOTYPE</scope>
</reference>
<feature type="chain" id="PRO_0000053795" description="Nuclear hormone receptor family member nhr-69">
    <location>
        <begin position="1"/>
        <end position="373"/>
    </location>
</feature>
<feature type="domain" description="NR LBD" evidence="2">
    <location>
        <begin position="93"/>
        <end position="344"/>
    </location>
</feature>
<feature type="DNA-binding region" description="Nuclear receptor" evidence="1">
    <location>
        <begin position="3"/>
        <end position="78"/>
    </location>
</feature>
<feature type="zinc finger region" description="NR C4-type" evidence="1">
    <location>
        <begin position="6"/>
        <end position="26"/>
    </location>
</feature>
<feature type="zinc finger region" description="NR C4-type" evidence="1">
    <location>
        <begin position="42"/>
        <end position="66"/>
    </location>
</feature>
<keyword id="KW-0238">DNA-binding</keyword>
<keyword id="KW-0479">Metal-binding</keyword>
<keyword id="KW-0539">Nucleus</keyword>
<keyword id="KW-0675">Receptor</keyword>
<keyword id="KW-1185">Reference proteome</keyword>
<keyword id="KW-0804">Transcription</keyword>
<keyword id="KW-0805">Transcription regulation</keyword>
<keyword id="KW-0862">Zinc</keyword>
<keyword id="KW-0863">Zinc-finger</keyword>
<gene>
    <name type="primary">nhr-69</name>
    <name type="ORF">T23H4.2</name>
</gene>
<name>NHR69_CAEEL</name>
<protein>
    <recommendedName>
        <fullName>Nuclear hormone receptor family member nhr-69</fullName>
    </recommendedName>
</protein>